<dbReference type="EMBL" id="Z49218">
    <property type="protein sequence ID" value="CAA89158.1"/>
    <property type="molecule type" value="Genomic_DNA"/>
</dbReference>
<dbReference type="EMBL" id="AY558538">
    <property type="protein sequence ID" value="AAS56864.1"/>
    <property type="molecule type" value="Genomic_DNA"/>
</dbReference>
<dbReference type="EMBL" id="BK006946">
    <property type="protein sequence ID" value="DAA80323.1"/>
    <property type="molecule type" value="Genomic_DNA"/>
</dbReference>
<dbReference type="PIR" id="S54062">
    <property type="entry name" value="S54062"/>
</dbReference>
<dbReference type="RefSeq" id="NP_001335803.1">
    <property type="nucleotide sequence ID" value="NM_001348863.1"/>
</dbReference>
<dbReference type="FunCoup" id="Q03207">
    <property type="interactions" value="33"/>
</dbReference>
<dbReference type="IntAct" id="Q03207">
    <property type="interactions" value="2"/>
</dbReference>
<dbReference type="STRING" id="4932.YML122C"/>
<dbReference type="PaxDb" id="4932-YML122C"/>
<dbReference type="EnsemblFungi" id="YML122C_mRNA">
    <property type="protein sequence ID" value="YML122C"/>
    <property type="gene ID" value="YML122C"/>
</dbReference>
<dbReference type="GeneID" id="854917"/>
<dbReference type="AGR" id="SGD:S000004591"/>
<dbReference type="SGD" id="S000004591">
    <property type="gene designation" value="YML122C"/>
</dbReference>
<dbReference type="HOGENOM" id="CLU_1983322_0_0_1"/>
<dbReference type="InParanoid" id="Q03207"/>
<dbReference type="OrthoDB" id="10360630at2759"/>
<dbReference type="PRO" id="PR:Q03207"/>
<dbReference type="Proteomes" id="UP000002311">
    <property type="component" value="Chromosome XIII"/>
</dbReference>
<dbReference type="RNAct" id="Q03207">
    <property type="molecule type" value="protein"/>
</dbReference>
<feature type="chain" id="PRO_0000203239" description="Uncharacterized protein YML122C">
    <location>
        <begin position="1"/>
        <end position="126"/>
    </location>
</feature>
<organism>
    <name type="scientific">Saccharomyces cerevisiae (strain ATCC 204508 / S288c)</name>
    <name type="common">Baker's yeast</name>
    <dbReference type="NCBI Taxonomy" id="559292"/>
    <lineage>
        <taxon>Eukaryota</taxon>
        <taxon>Fungi</taxon>
        <taxon>Dikarya</taxon>
        <taxon>Ascomycota</taxon>
        <taxon>Saccharomycotina</taxon>
        <taxon>Saccharomycetes</taxon>
        <taxon>Saccharomycetales</taxon>
        <taxon>Saccharomycetaceae</taxon>
        <taxon>Saccharomyces</taxon>
    </lineage>
</organism>
<gene>
    <name type="ordered locus">YML122C</name>
    <name type="ORF">YM7056.04C</name>
</gene>
<reference key="1">
    <citation type="journal article" date="1997" name="Nature">
        <title>The nucleotide sequence of Saccharomyces cerevisiae chromosome XIII.</title>
        <authorList>
            <person name="Bowman S."/>
            <person name="Churcher C.M."/>
            <person name="Badcock K."/>
            <person name="Brown D."/>
            <person name="Chillingworth T."/>
            <person name="Connor R."/>
            <person name="Dedman K."/>
            <person name="Devlin K."/>
            <person name="Gentles S."/>
            <person name="Hamlin N."/>
            <person name="Hunt S."/>
            <person name="Jagels K."/>
            <person name="Lye G."/>
            <person name="Moule S."/>
            <person name="Odell C."/>
            <person name="Pearson D."/>
            <person name="Rajandream M.A."/>
            <person name="Rice P."/>
            <person name="Skelton J."/>
            <person name="Walsh S.V."/>
            <person name="Whitehead S."/>
            <person name="Barrell B.G."/>
        </authorList>
    </citation>
    <scope>NUCLEOTIDE SEQUENCE [LARGE SCALE GENOMIC DNA]</scope>
    <source>
        <strain>ATCC 204508 / S288c</strain>
    </source>
</reference>
<reference key="2">
    <citation type="journal article" date="2014" name="G3 (Bethesda)">
        <title>The reference genome sequence of Saccharomyces cerevisiae: Then and now.</title>
        <authorList>
            <person name="Engel S.R."/>
            <person name="Dietrich F.S."/>
            <person name="Fisk D.G."/>
            <person name="Binkley G."/>
            <person name="Balakrishnan R."/>
            <person name="Costanzo M.C."/>
            <person name="Dwight S.S."/>
            <person name="Hitz B.C."/>
            <person name="Karra K."/>
            <person name="Nash R.S."/>
            <person name="Weng S."/>
            <person name="Wong E.D."/>
            <person name="Lloyd P."/>
            <person name="Skrzypek M.S."/>
            <person name="Miyasato S.R."/>
            <person name="Simison M."/>
            <person name="Cherry J.M."/>
        </authorList>
    </citation>
    <scope>GENOME REANNOTATION</scope>
    <source>
        <strain>ATCC 204508 / S288c</strain>
    </source>
</reference>
<reference key="3">
    <citation type="journal article" date="2007" name="Genome Res.">
        <title>Approaching a complete repository of sequence-verified protein-encoding clones for Saccharomyces cerevisiae.</title>
        <authorList>
            <person name="Hu Y."/>
            <person name="Rolfs A."/>
            <person name="Bhullar B."/>
            <person name="Murthy T.V.S."/>
            <person name="Zhu C."/>
            <person name="Berger M.F."/>
            <person name="Camargo A.A."/>
            <person name="Kelley F."/>
            <person name="McCarron S."/>
            <person name="Jepson D."/>
            <person name="Richardson A."/>
            <person name="Raphael J."/>
            <person name="Moreira D."/>
            <person name="Taycher E."/>
            <person name="Zuo D."/>
            <person name="Mohr S."/>
            <person name="Kane M.F."/>
            <person name="Williamson J."/>
            <person name="Simpson A.J.G."/>
            <person name="Bulyk M.L."/>
            <person name="Harlow E."/>
            <person name="Marsischky G."/>
            <person name="Kolodner R.D."/>
            <person name="LaBaer J."/>
        </authorList>
    </citation>
    <scope>NUCLEOTIDE SEQUENCE [GENOMIC DNA]</scope>
    <source>
        <strain>ATCC 204508 / S288c</strain>
    </source>
</reference>
<accession>Q03207</accession>
<accession>A0A1S0T099</accession>
<keyword id="KW-1185">Reference proteome</keyword>
<sequence length="126" mass="14473">MPRNDSNQYYARWCCYRRPIRAAFARKGPFNSSSGYEENVARLKNTRSSHCRTARCQFNSSTWTCYFQHVGRKLATAIDYGSPQSIEISEIGAVMHQMSCERLSLSLFSRFACLLARLKTCVLLIN</sequence>
<proteinExistence type="predicted"/>
<name>YMM2_YEAST</name>
<protein>
    <recommendedName>
        <fullName>Uncharacterized protein YML122C</fullName>
    </recommendedName>
</protein>